<sequence>MQKSALAIALASLLTPISYLHANEAQPQETVVVTANRFEQKASSTLADVEIITRQDIEQTQAKTLPELLRRLTGVQITQNGGRGQLASLFVRGTSSDQVLVLVDGIRFARAAKGAVDFNQIPLTYVDRIEYVRGARASLYGSEAIGGVINIITKARSQQQGTTVSAGLGSLDYQELSIASGVAIGEKGQMNVALGTESDKGYNVRPVPGVNDGDRHGFRSDNALLGYVHQFDESWSLFANARAYENIYQYDNSYGTRDYKEAEKDDLSFTIGTQYQSERWVSELQLTTQKQKSWDYTQSKGKYSDTSDNLEQRNIQWINRYLVNDVWTFAGGVDWRDESYIDKTADKEFDRSNTAAFAVVAAEWQQWLLEASLRFDDNQEYGSQTTHNIALGYQFIPEFGVKASYGSAFKAPNLYQQYDPSYGNVNLQPEDADSAELSFYGLFSGIKWSITGYDYKINNLIDYNSTTKNYQNVIGESNIKGVEFTAEFATGIVQHQLSVDLKDADDSKGKTLQRRAEHMYKWNALVAFEQVDWSIGYQYVGKRPDLDYNTYPTQNITLDAYSLVDTSVSYYVTDSTTISARIDNLLDKEYETANGYPAAERAYYLNIGYQF</sequence>
<reference key="1">
    <citation type="journal article" date="2000" name="Nature">
        <title>DNA sequence of both chromosomes of the cholera pathogen Vibrio cholerae.</title>
        <authorList>
            <person name="Heidelberg J.F."/>
            <person name="Eisen J.A."/>
            <person name="Nelson W.C."/>
            <person name="Clayton R.A."/>
            <person name="Gwinn M.L."/>
            <person name="Dodson R.J."/>
            <person name="Haft D.H."/>
            <person name="Hickey E.K."/>
            <person name="Peterson J.D."/>
            <person name="Umayam L.A."/>
            <person name="Gill S.R."/>
            <person name="Nelson K.E."/>
            <person name="Read T.D."/>
            <person name="Tettelin H."/>
            <person name="Richardson D.L."/>
            <person name="Ermolaeva M.D."/>
            <person name="Vamathevan J.J."/>
            <person name="Bass S."/>
            <person name="Qin H."/>
            <person name="Dragoi I."/>
            <person name="Sellers P."/>
            <person name="McDonald L.A."/>
            <person name="Utterback T.R."/>
            <person name="Fleischmann R.D."/>
            <person name="Nierman W.C."/>
            <person name="White O."/>
            <person name="Salzberg S.L."/>
            <person name="Smith H.O."/>
            <person name="Colwell R.R."/>
            <person name="Mekalanos J.J."/>
            <person name="Venter J.C."/>
            <person name="Fraser C.M."/>
        </authorList>
    </citation>
    <scope>NUCLEOTIDE SEQUENCE [LARGE SCALE GENOMIC DNA]</scope>
    <source>
        <strain>ATCC 39315 / El Tor Inaba N16961</strain>
    </source>
</reference>
<dbReference type="EMBL" id="AE003852">
    <property type="protein sequence ID" value="AAF93332.1"/>
    <property type="molecule type" value="Genomic_DNA"/>
</dbReference>
<dbReference type="PIR" id="A82358">
    <property type="entry name" value="A82358"/>
</dbReference>
<dbReference type="RefSeq" id="NP_229813.1">
    <property type="nucleotide sequence ID" value="NC_002505.1"/>
</dbReference>
<dbReference type="RefSeq" id="WP_001172310.1">
    <property type="nucleotide sequence ID" value="NZ_LT906614.1"/>
</dbReference>
<dbReference type="SMR" id="Q9KVI9"/>
<dbReference type="STRING" id="243277.VC_0156"/>
<dbReference type="DNASU" id="2612956"/>
<dbReference type="EnsemblBacteria" id="AAF93332">
    <property type="protein sequence ID" value="AAF93332"/>
    <property type="gene ID" value="VC_0156"/>
</dbReference>
<dbReference type="KEGG" id="vch:VC_0156"/>
<dbReference type="PATRIC" id="fig|243277.26.peg.143"/>
<dbReference type="eggNOG" id="COG4206">
    <property type="taxonomic scope" value="Bacteria"/>
</dbReference>
<dbReference type="HOGENOM" id="CLU_008287_18_5_6"/>
<dbReference type="Proteomes" id="UP000000584">
    <property type="component" value="Chromosome 1"/>
</dbReference>
<dbReference type="GO" id="GO:0009279">
    <property type="term" value="C:cell outer membrane"/>
    <property type="evidence" value="ECO:0000318"/>
    <property type="project" value="GO_Central"/>
</dbReference>
<dbReference type="GO" id="GO:0046930">
    <property type="term" value="C:pore complex"/>
    <property type="evidence" value="ECO:0007669"/>
    <property type="project" value="UniProtKB-KW"/>
</dbReference>
<dbReference type="GO" id="GO:0015420">
    <property type="term" value="F:ABC-type vitamin B12 transporter activity"/>
    <property type="evidence" value="ECO:0007669"/>
    <property type="project" value="InterPro"/>
</dbReference>
<dbReference type="GO" id="GO:0015288">
    <property type="term" value="F:porin activity"/>
    <property type="evidence" value="ECO:0007669"/>
    <property type="project" value="UniProtKB-KW"/>
</dbReference>
<dbReference type="GO" id="GO:0015889">
    <property type="term" value="P:cobalamin transport"/>
    <property type="evidence" value="ECO:0000318"/>
    <property type="project" value="GO_Central"/>
</dbReference>
<dbReference type="GO" id="GO:0006811">
    <property type="term" value="P:monoatomic ion transport"/>
    <property type="evidence" value="ECO:0007669"/>
    <property type="project" value="UniProtKB-KW"/>
</dbReference>
<dbReference type="CDD" id="cd01347">
    <property type="entry name" value="ligand_gated_channel"/>
    <property type="match status" value="1"/>
</dbReference>
<dbReference type="FunFam" id="2.170.130.10:FF:000002">
    <property type="entry name" value="Vitamin B12 transporter BtuB"/>
    <property type="match status" value="1"/>
</dbReference>
<dbReference type="Gene3D" id="2.40.170.20">
    <property type="entry name" value="TonB-dependent receptor, beta-barrel domain"/>
    <property type="match status" value="1"/>
</dbReference>
<dbReference type="Gene3D" id="2.170.130.10">
    <property type="entry name" value="TonB-dependent receptor, plug domain"/>
    <property type="match status" value="1"/>
</dbReference>
<dbReference type="HAMAP" id="MF_01531">
    <property type="entry name" value="BtuB"/>
    <property type="match status" value="1"/>
</dbReference>
<dbReference type="InterPro" id="IPR010101">
    <property type="entry name" value="B12_transptr_BtuB"/>
</dbReference>
<dbReference type="InterPro" id="IPR012910">
    <property type="entry name" value="Plug_dom"/>
</dbReference>
<dbReference type="InterPro" id="IPR037066">
    <property type="entry name" value="Plug_dom_sf"/>
</dbReference>
<dbReference type="InterPro" id="IPR039426">
    <property type="entry name" value="TonB-dep_rcpt-like"/>
</dbReference>
<dbReference type="InterPro" id="IPR000531">
    <property type="entry name" value="TonB-dep_rcpt_b-brl"/>
</dbReference>
<dbReference type="InterPro" id="IPR010916">
    <property type="entry name" value="TonB_box_CS"/>
</dbReference>
<dbReference type="InterPro" id="IPR036942">
    <property type="entry name" value="TonB_rcpt_b-brl_sf"/>
</dbReference>
<dbReference type="InterPro" id="IPR010917">
    <property type="entry name" value="TonB_rcpt_CS"/>
</dbReference>
<dbReference type="NCBIfam" id="TIGR01779">
    <property type="entry name" value="TonB-B12"/>
    <property type="match status" value="1"/>
</dbReference>
<dbReference type="PANTHER" id="PTHR30069:SF53">
    <property type="entry name" value="COLICIN I RECEPTOR-RELATED"/>
    <property type="match status" value="1"/>
</dbReference>
<dbReference type="PANTHER" id="PTHR30069">
    <property type="entry name" value="TONB-DEPENDENT OUTER MEMBRANE RECEPTOR"/>
    <property type="match status" value="1"/>
</dbReference>
<dbReference type="Pfam" id="PF07715">
    <property type="entry name" value="Plug"/>
    <property type="match status" value="1"/>
</dbReference>
<dbReference type="Pfam" id="PF00593">
    <property type="entry name" value="TonB_dep_Rec_b-barrel"/>
    <property type="match status" value="1"/>
</dbReference>
<dbReference type="SUPFAM" id="SSF56935">
    <property type="entry name" value="Porins"/>
    <property type="match status" value="1"/>
</dbReference>
<dbReference type="PROSITE" id="PS00430">
    <property type="entry name" value="TONB_DEPENDENT_REC_1"/>
    <property type="match status" value="1"/>
</dbReference>
<dbReference type="PROSITE" id="PS01156">
    <property type="entry name" value="TONB_DEPENDENT_REC_2"/>
    <property type="match status" value="1"/>
</dbReference>
<dbReference type="PROSITE" id="PS52016">
    <property type="entry name" value="TONB_DEPENDENT_REC_3"/>
    <property type="match status" value="1"/>
</dbReference>
<protein>
    <recommendedName>
        <fullName evidence="1">Vitamin B12 transporter BtuB</fullName>
    </recommendedName>
    <alternativeName>
        <fullName evidence="1">Cobalamin receptor</fullName>
    </alternativeName>
    <alternativeName>
        <fullName evidence="1">Outer membrane cobalamin translocator</fullName>
    </alternativeName>
</protein>
<evidence type="ECO:0000255" key="1">
    <source>
        <dbReference type="HAMAP-Rule" id="MF_01531"/>
    </source>
</evidence>
<evidence type="ECO:0000255" key="2">
    <source>
        <dbReference type="PROSITE-ProRule" id="PRU01360"/>
    </source>
</evidence>
<comment type="function">
    <text evidence="1">Involved in the active translocation of vitamin B12 (cyanocobalamin) across the outer membrane to the periplasmic space. It derives its energy for transport by interacting with the trans-periplasmic membrane protein TonB.</text>
</comment>
<comment type="subcellular location">
    <subcellularLocation>
        <location evidence="1">Cell outer membrane</location>
        <topology evidence="1">Multi-pass membrane protein</topology>
    </subcellularLocation>
</comment>
<comment type="similarity">
    <text evidence="1">Belongs to the TonB-dependent receptor family. BtuB (TC 1.B.14.3.1) subfamily.</text>
</comment>
<name>BTUB_VIBCH</name>
<feature type="signal peptide" evidence="1">
    <location>
        <begin position="1"/>
        <end position="22"/>
    </location>
</feature>
<feature type="chain" id="PRO_0000003491" description="Vitamin B12 transporter BtuB">
    <location>
        <begin position="23"/>
        <end position="611"/>
    </location>
</feature>
<feature type="domain" description="TBDR plug" evidence="2">
    <location>
        <begin position="41"/>
        <end position="154"/>
    </location>
</feature>
<feature type="domain" description="TBDR beta-barrel" evidence="2">
    <location>
        <begin position="159"/>
        <end position="611"/>
    </location>
</feature>
<feature type="short sequence motif" description="TonB box">
    <location>
        <begin position="29"/>
        <end position="36"/>
    </location>
</feature>
<feature type="short sequence motif" description="TonB C-terminal box">
    <location>
        <begin position="594"/>
        <end position="611"/>
    </location>
</feature>
<gene>
    <name evidence="1" type="primary">btuB</name>
    <name type="ordered locus">VC_0156</name>
</gene>
<keyword id="KW-0998">Cell outer membrane</keyword>
<keyword id="KW-0406">Ion transport</keyword>
<keyword id="KW-0472">Membrane</keyword>
<keyword id="KW-0626">Porin</keyword>
<keyword id="KW-1185">Reference proteome</keyword>
<keyword id="KW-0732">Signal</keyword>
<keyword id="KW-0798">TonB box</keyword>
<keyword id="KW-0812">Transmembrane</keyword>
<keyword id="KW-1134">Transmembrane beta strand</keyword>
<keyword id="KW-0813">Transport</keyword>
<proteinExistence type="inferred from homology"/>
<accession>Q9KVI9</accession>
<organism>
    <name type="scientific">Vibrio cholerae serotype O1 (strain ATCC 39315 / El Tor Inaba N16961)</name>
    <dbReference type="NCBI Taxonomy" id="243277"/>
    <lineage>
        <taxon>Bacteria</taxon>
        <taxon>Pseudomonadati</taxon>
        <taxon>Pseudomonadota</taxon>
        <taxon>Gammaproteobacteria</taxon>
        <taxon>Vibrionales</taxon>
        <taxon>Vibrionaceae</taxon>
        <taxon>Vibrio</taxon>
    </lineage>
</organism>